<accession>P75231</accession>
<reference key="1">
    <citation type="journal article" date="1996" name="Nucleic Acids Res.">
        <title>Complete sequence analysis of the genome of the bacterium Mycoplasma pneumoniae.</title>
        <authorList>
            <person name="Himmelreich R."/>
            <person name="Hilbert H."/>
            <person name="Plagens H."/>
            <person name="Pirkl E."/>
            <person name="Li B.-C."/>
            <person name="Herrmann R."/>
        </authorList>
    </citation>
    <scope>NUCLEOTIDE SEQUENCE [LARGE SCALE GENOMIC DNA]</scope>
    <source>
        <strain>ATCC 29342 / M129 / Subtype 1</strain>
    </source>
</reference>
<name>Y547_MYCPN</name>
<evidence type="ECO:0000255" key="1">
    <source>
        <dbReference type="PROSITE-ProRule" id="PRU00813"/>
    </source>
</evidence>
<sequence length="558" mass="62438">MSTVNLSNFIDMLRLGCKNIANNFEYINQLNVFPVPDGDTGTNMKVTLSEAFKKLESEISHIKSFSDLGKSFTRDLLLFSRGNSGVIFSQIMKGFFSDMISTKTATETELGIEDFATAFIKAEEVAYKNVSKPVEGTMLTVIRLISTDFKNQKNRAKTVQKLFEQVIKTAWQTVKKTPQMLPVLKASGVVDSGAYGFACFLEGMLSFYGEKATLNDGKLTSAELSQMTISGEKHVTEEEFGYCTEYVLKLGMSVSQEVEKQKFNQKKFESKVSKIATSVVVASDKDNGFVKVHAHTEKPNLLLELGLNYGEFELVKIENMNLQVAKQKPAPVKRNIKPAIVVTVPTEAFADRIREDYDIQAILCTDDTGAPSVFSLLEAVKLTHSSNIIFLLHDKNYFLSANEALKQLKHQKISADCVMTTNPIESLAALTVFNSDLNIHTNVKTMRRFVKGFASATITQASKKYKENRIEVNKGDFIAVANNSICVSEKELVQCVFNTIDHLLKKVKKPEFLLAYYGKDITAEEAEAMKEKIEKKYKLFCEFSPGEQKVFSYILGIQ</sequence>
<organism>
    <name type="scientific">Mycoplasma pneumoniae (strain ATCC 29342 / M129 / Subtype 1)</name>
    <name type="common">Mycoplasmoides pneumoniae</name>
    <dbReference type="NCBI Taxonomy" id="272634"/>
    <lineage>
        <taxon>Bacteria</taxon>
        <taxon>Bacillati</taxon>
        <taxon>Mycoplasmatota</taxon>
        <taxon>Mycoplasmoidales</taxon>
        <taxon>Mycoplasmoidaceae</taxon>
        <taxon>Mycoplasmoides</taxon>
    </lineage>
</organism>
<protein>
    <recommendedName>
        <fullName>Uncharacterized protein MG369 homolog</fullName>
    </recommendedName>
</protein>
<gene>
    <name type="ordered locus">MPN_547</name>
    <name type="ORF">G12_orf558</name>
    <name type="ORF">MP295</name>
</gene>
<dbReference type="EMBL" id="U00089">
    <property type="protein sequence ID" value="AAB95943.1"/>
    <property type="molecule type" value="Genomic_DNA"/>
</dbReference>
<dbReference type="PIR" id="S73621">
    <property type="entry name" value="S73621"/>
</dbReference>
<dbReference type="RefSeq" id="NP_110236.1">
    <property type="nucleotide sequence ID" value="NC_000912.1"/>
</dbReference>
<dbReference type="RefSeq" id="WP_010874904.1">
    <property type="nucleotide sequence ID" value="NZ_OU342337.1"/>
</dbReference>
<dbReference type="SMR" id="P75231"/>
<dbReference type="IntAct" id="P75231">
    <property type="interactions" value="1"/>
</dbReference>
<dbReference type="STRING" id="272634.MPN_547"/>
<dbReference type="EnsemblBacteria" id="AAB95943">
    <property type="protein sequence ID" value="AAB95943"/>
    <property type="gene ID" value="MPN_547"/>
</dbReference>
<dbReference type="KEGG" id="mpn:MPN_547"/>
<dbReference type="PATRIC" id="fig|272634.6.peg.609"/>
<dbReference type="HOGENOM" id="CLU_017496_1_0_14"/>
<dbReference type="OrthoDB" id="9760324at2"/>
<dbReference type="BioCyc" id="MPNE272634:G1GJ3-902-MONOMER"/>
<dbReference type="Proteomes" id="UP000000808">
    <property type="component" value="Chromosome"/>
</dbReference>
<dbReference type="GO" id="GO:0004371">
    <property type="term" value="F:glycerone kinase activity"/>
    <property type="evidence" value="ECO:0007669"/>
    <property type="project" value="InterPro"/>
</dbReference>
<dbReference type="GO" id="GO:0006071">
    <property type="term" value="P:glycerol metabolic process"/>
    <property type="evidence" value="ECO:0007669"/>
    <property type="project" value="InterPro"/>
</dbReference>
<dbReference type="Gene3D" id="1.25.40.340">
    <property type="match status" value="1"/>
</dbReference>
<dbReference type="InterPro" id="IPR050270">
    <property type="entry name" value="DegV_domain_contain"/>
</dbReference>
<dbReference type="InterPro" id="IPR004007">
    <property type="entry name" value="DhaL_dom"/>
</dbReference>
<dbReference type="InterPro" id="IPR036117">
    <property type="entry name" value="DhaL_dom_sf"/>
</dbReference>
<dbReference type="InterPro" id="IPR033470">
    <property type="entry name" value="FakA-like_C"/>
</dbReference>
<dbReference type="InterPro" id="IPR048394">
    <property type="entry name" value="FakA-like_M"/>
</dbReference>
<dbReference type="InterPro" id="IPR019986">
    <property type="entry name" value="YloV-like"/>
</dbReference>
<dbReference type="NCBIfam" id="TIGR03599">
    <property type="entry name" value="YloV"/>
    <property type="match status" value="1"/>
</dbReference>
<dbReference type="PANTHER" id="PTHR33434">
    <property type="entry name" value="DEGV DOMAIN-CONTAINING PROTEIN DR_1986-RELATED"/>
    <property type="match status" value="1"/>
</dbReference>
<dbReference type="PANTHER" id="PTHR33434:SF4">
    <property type="entry name" value="PHOSPHATASE PROTEIN"/>
    <property type="match status" value="1"/>
</dbReference>
<dbReference type="Pfam" id="PF02734">
    <property type="entry name" value="Dak2"/>
    <property type="match status" value="1"/>
</dbReference>
<dbReference type="Pfam" id="PF13684">
    <property type="entry name" value="FakA-like_C"/>
    <property type="match status" value="1"/>
</dbReference>
<dbReference type="Pfam" id="PF21645">
    <property type="entry name" value="FakA-like_M"/>
    <property type="match status" value="1"/>
</dbReference>
<dbReference type="SMART" id="SM01121">
    <property type="entry name" value="Dak1_2"/>
    <property type="match status" value="1"/>
</dbReference>
<dbReference type="SMART" id="SM01120">
    <property type="entry name" value="Dak2"/>
    <property type="match status" value="1"/>
</dbReference>
<dbReference type="SUPFAM" id="SSF101473">
    <property type="entry name" value="DhaL-like"/>
    <property type="match status" value="1"/>
</dbReference>
<dbReference type="PROSITE" id="PS51480">
    <property type="entry name" value="DHAL"/>
    <property type="match status" value="1"/>
</dbReference>
<keyword id="KW-1185">Reference proteome</keyword>
<proteinExistence type="predicted"/>
<feature type="chain" id="PRO_0000210571" description="Uncharacterized protein MG369 homolog">
    <location>
        <begin position="1"/>
        <end position="558"/>
    </location>
</feature>
<feature type="domain" description="DhaL" evidence="1">
    <location>
        <begin position="7"/>
        <end position="206"/>
    </location>
</feature>